<name>MOD5_HUMAN</name>
<comment type="function">
    <text evidence="4 6 7 11">Catalyzes the transfer of a dimethylallyl group onto the adenine at position 37 of both cytosolic and mitochondrial tRNAs, leading to the formation of N6-(dimethylallyl)adenosine (i6A37) (PubMed:11111046, PubMed:24126054, PubMed:24901367, PubMed:34774131). Mediates modification of a limited subset of tRNAs: tRNA(Ser)(AGA), tRNA(Ser)(CGA), tRNA(Ser)(UGA), as well as partial modification of the selenocysteine tRNA(Ser)(UCA) (PubMed:24126054). TRIT1 is therefore required for selenoprotein expression (PubMed:24126054).</text>
</comment>
<comment type="catalytic activity">
    <reaction evidence="6 7">
        <text>adenosine(37) in tRNA + dimethylallyl diphosphate = N(6)-dimethylallyladenosine(37) in tRNA + diphosphate</text>
        <dbReference type="Rhea" id="RHEA:26482"/>
        <dbReference type="Rhea" id="RHEA-COMP:10162"/>
        <dbReference type="Rhea" id="RHEA-COMP:10375"/>
        <dbReference type="ChEBI" id="CHEBI:33019"/>
        <dbReference type="ChEBI" id="CHEBI:57623"/>
        <dbReference type="ChEBI" id="CHEBI:74411"/>
        <dbReference type="ChEBI" id="CHEBI:74415"/>
        <dbReference type="EC" id="2.5.1.75"/>
    </reaction>
</comment>
<comment type="interaction">
    <interactant intactId="EBI-25932209">
        <id>Q9H3H1-5</id>
    </interactant>
    <interactant intactId="EBI-5235340">
        <id>Q7Z699</id>
        <label>SPRED1</label>
    </interactant>
    <organismsDiffer>false</organismsDiffer>
    <experiments>3</experiments>
</comment>
<comment type="subcellular location">
    <molecule>Isoform 1</molecule>
    <subcellularLocation>
        <location evidence="7">Mitochondrion</location>
    </subcellularLocation>
</comment>
<comment type="subcellular location">
    <molecule>Isoform 4</molecule>
    <subcellularLocation>
        <location evidence="17">Mitochondrion</location>
    </subcellularLocation>
</comment>
<comment type="subcellular location">
    <molecule>Isoform 2</molecule>
    <subcellularLocation>
        <location evidence="17">Cytoplasm</location>
    </subcellularLocation>
</comment>
<comment type="subcellular location">
    <molecule>Isoform 3</molecule>
    <subcellularLocation>
        <location evidence="17">Cytoplasm</location>
    </subcellularLocation>
</comment>
<comment type="subcellular location">
    <molecule>Isoform 5</molecule>
    <subcellularLocation>
        <location evidence="17">Cytoplasm</location>
    </subcellularLocation>
</comment>
<comment type="alternative products">
    <event type="alternative splicing"/>
    <isoform>
        <id>Q9H3H1-1</id>
        <name>1</name>
        <sequence type="displayed"/>
    </isoform>
    <isoform>
        <id>Q9H3H1-2</id>
        <name>2</name>
        <sequence type="described" ref="VSP_010719"/>
    </isoform>
    <isoform>
        <id>Q9H3H1-3</id>
        <name>3</name>
        <sequence type="described" ref="VSP_010719 VSP_010720"/>
    </isoform>
    <isoform>
        <id>Q9H3H1-4</id>
        <name>4</name>
        <sequence type="described" ref="VSP_010721"/>
    </isoform>
    <isoform>
        <id>Q9H3H1-5</id>
        <name>5</name>
        <sequence type="described" ref="VSP_012415 VSP_010720"/>
    </isoform>
    <isoform>
        <id>Q9H3H1-6</id>
        <name>6</name>
        <sequence type="described" ref="VSP_053746 VSP_053747"/>
    </isoform>
</comment>
<comment type="disease" evidence="7 8 9 10">
    <disease id="DI-05193">
        <name>Combined oxidative phosphorylation deficiency 35</name>
        <acronym>COXPD35</acronym>
        <description>An autosomal recessive disorder caused by defective mitochondrial metabolism and deficiencies of mitochondrial respiratory enzyme complexes. Clinical manifestations include global developmental delay, intellectual disability, microcephaly, and early-onset seizures.</description>
        <dbReference type="MIM" id="617873"/>
    </disease>
    <text>The disease is caused by variants affecting the gene represented in this entry.</text>
</comment>
<comment type="similarity">
    <text evidence="17">Belongs to the IPP transferase family.</text>
</comment>
<sequence>MASVAAARAVPVGSGLRGLQRTLPLVVILGATGTGKSTLALQLGQRLGGEIVSADSMQVYEGLDIITNKVSAQEQRICRHHMISFVDPLVTNYTVVDFRNRATALIEDIFARDKIPIVVGGTNYYIESLLWKVLVNTKPQEMGTEKVIDRKVELEKEDGLVLHKRLSQVDPEMAAKLHPHDKRKVARSLQVFEETGISHSEFLHRQHTEEGGGPLGGPLKFSNPCILWLHADQAVLDERLDKRVDDMLAAGLLEELRDFHRRYNQKNVSENSQDYQHGIFQSIGFKEFHEYLITEGKCTLETSNQLLKKGIEALKQVTKRYARKQNRWVKNRFLSRPGPIVPPVYGLEVSDVSKWEESVLEPALEIVQSFIQGHKPTATPIKMPYNEAENKRSYHLCDLCDRIIIGDREWAAHIKSKSHLNQLKKRRRLDSDAVNTIESQSVSPDHNKEPKEKGSPGQNDQELKCSV</sequence>
<accession>Q9H3H1</accession>
<accession>A1A4X7</accession>
<accession>Q3T7B5</accession>
<accession>Q5QPK5</accession>
<accession>Q5QPK6</accession>
<accession>Q6IAC9</accession>
<accession>Q96FJ3</accession>
<accession>Q96L45</accession>
<accession>Q9NXT7</accession>
<evidence type="ECO:0000250" key="1">
    <source>
        <dbReference type="UniProtKB" id="P07884"/>
    </source>
</evidence>
<evidence type="ECO:0000255" key="2"/>
<evidence type="ECO:0000256" key="3">
    <source>
        <dbReference type="SAM" id="MobiDB-lite"/>
    </source>
</evidence>
<evidence type="ECO:0000269" key="4">
    <source>
    </source>
</evidence>
<evidence type="ECO:0000269" key="5">
    <source>
    </source>
</evidence>
<evidence type="ECO:0000269" key="6">
    <source>
    </source>
</evidence>
<evidence type="ECO:0000269" key="7">
    <source>
    </source>
</evidence>
<evidence type="ECO:0000269" key="8">
    <source>
    </source>
</evidence>
<evidence type="ECO:0000269" key="9">
    <source>
    </source>
</evidence>
<evidence type="ECO:0000269" key="10">
    <source>
    </source>
</evidence>
<evidence type="ECO:0000269" key="11">
    <source>
    </source>
</evidence>
<evidence type="ECO:0000303" key="12">
    <source>
    </source>
</evidence>
<evidence type="ECO:0000303" key="13">
    <source>
    </source>
</evidence>
<evidence type="ECO:0000303" key="14">
    <source>
    </source>
</evidence>
<evidence type="ECO:0000303" key="15">
    <source>
    </source>
</evidence>
<evidence type="ECO:0000303" key="16">
    <source ref="5"/>
</evidence>
<evidence type="ECO:0000305" key="17"/>
<evidence type="ECO:0007744" key="18">
    <source>
    </source>
</evidence>
<evidence type="ECO:0007744" key="19">
    <source>
    </source>
</evidence>
<proteinExistence type="evidence at protein level"/>
<reference key="1">
    <citation type="journal article" date="2000" name="Gene">
        <title>Cloning of a human tRNA isopentenyl transferase.</title>
        <authorList>
            <person name="Golovko A."/>
            <person name="Hjalm G."/>
            <person name="Sitbon F."/>
            <person name="Nicander B."/>
        </authorList>
    </citation>
    <scope>NUCLEOTIDE SEQUENCE [MRNA] (ISOFORM 1)</scope>
    <scope>FUNCTION</scope>
</reference>
<reference key="2">
    <citation type="journal article" date="2005" name="Oncogene">
        <title>Identification and functional characterization of the candidate tumor suppressor gene TRIT1 in human lung cancer.</title>
        <authorList>
            <person name="Spinola M."/>
            <person name="Galvan A."/>
            <person name="Pignatiello C."/>
            <person name="Conti B."/>
            <person name="Pastorino U."/>
            <person name="Nicander B."/>
            <person name="Paroni R."/>
            <person name="Dragani T.A."/>
        </authorList>
    </citation>
    <scope>NUCLEOTIDE SEQUENCE [MRNA] (ISOFORM 6)</scope>
    <scope>ALTERNATIVE SPLICING</scope>
    <source>
        <tissue>Lung</tissue>
    </source>
</reference>
<reference key="3">
    <citation type="submission" date="2003-05" db="EMBL/GenBank/DDBJ databases">
        <title>Human MOD5 cDNA sequence.</title>
        <authorList>
            <person name="Peters J.L."/>
            <person name="Yan Q."/>
            <person name="Guan M.X."/>
        </authorList>
    </citation>
    <scope>NUCLEOTIDE SEQUENCE [MRNA] (ISOFORM 1)</scope>
</reference>
<reference key="4">
    <citation type="journal article" date="2004" name="Nat. Genet.">
        <title>Complete sequencing and characterization of 21,243 full-length human cDNAs.</title>
        <authorList>
            <person name="Ota T."/>
            <person name="Suzuki Y."/>
            <person name="Nishikawa T."/>
            <person name="Otsuki T."/>
            <person name="Sugiyama T."/>
            <person name="Irie R."/>
            <person name="Wakamatsu A."/>
            <person name="Hayashi K."/>
            <person name="Sato H."/>
            <person name="Nagai K."/>
            <person name="Kimura K."/>
            <person name="Makita H."/>
            <person name="Sekine M."/>
            <person name="Obayashi M."/>
            <person name="Nishi T."/>
            <person name="Shibahara T."/>
            <person name="Tanaka T."/>
            <person name="Ishii S."/>
            <person name="Yamamoto J."/>
            <person name="Saito K."/>
            <person name="Kawai Y."/>
            <person name="Isono Y."/>
            <person name="Nakamura Y."/>
            <person name="Nagahari K."/>
            <person name="Murakami K."/>
            <person name="Yasuda T."/>
            <person name="Iwayanagi T."/>
            <person name="Wagatsuma M."/>
            <person name="Shiratori A."/>
            <person name="Sudo H."/>
            <person name="Hosoiri T."/>
            <person name="Kaku Y."/>
            <person name="Kodaira H."/>
            <person name="Kondo H."/>
            <person name="Sugawara M."/>
            <person name="Takahashi M."/>
            <person name="Kanda K."/>
            <person name="Yokoi T."/>
            <person name="Furuya T."/>
            <person name="Kikkawa E."/>
            <person name="Omura Y."/>
            <person name="Abe K."/>
            <person name="Kamihara K."/>
            <person name="Katsuta N."/>
            <person name="Sato K."/>
            <person name="Tanikawa M."/>
            <person name="Yamazaki M."/>
            <person name="Ninomiya K."/>
            <person name="Ishibashi T."/>
            <person name="Yamashita H."/>
            <person name="Murakawa K."/>
            <person name="Fujimori K."/>
            <person name="Tanai H."/>
            <person name="Kimata M."/>
            <person name="Watanabe M."/>
            <person name="Hiraoka S."/>
            <person name="Chiba Y."/>
            <person name="Ishida S."/>
            <person name="Ono Y."/>
            <person name="Takiguchi S."/>
            <person name="Watanabe S."/>
            <person name="Yosida M."/>
            <person name="Hotuta T."/>
            <person name="Kusano J."/>
            <person name="Kanehori K."/>
            <person name="Takahashi-Fujii A."/>
            <person name="Hara H."/>
            <person name="Tanase T.-O."/>
            <person name="Nomura Y."/>
            <person name="Togiya S."/>
            <person name="Komai F."/>
            <person name="Hara R."/>
            <person name="Takeuchi K."/>
            <person name="Arita M."/>
            <person name="Imose N."/>
            <person name="Musashino K."/>
            <person name="Yuuki H."/>
            <person name="Oshima A."/>
            <person name="Sasaki N."/>
            <person name="Aotsuka S."/>
            <person name="Yoshikawa Y."/>
            <person name="Matsunawa H."/>
            <person name="Ichihara T."/>
            <person name="Shiohata N."/>
            <person name="Sano S."/>
            <person name="Moriya S."/>
            <person name="Momiyama H."/>
            <person name="Satoh N."/>
            <person name="Takami S."/>
            <person name="Terashima Y."/>
            <person name="Suzuki O."/>
            <person name="Nakagawa S."/>
            <person name="Senoh A."/>
            <person name="Mizoguchi H."/>
            <person name="Goto Y."/>
            <person name="Shimizu F."/>
            <person name="Wakebe H."/>
            <person name="Hishigaki H."/>
            <person name="Watanabe T."/>
            <person name="Sugiyama A."/>
            <person name="Takemoto M."/>
            <person name="Kawakami B."/>
            <person name="Yamazaki M."/>
            <person name="Watanabe K."/>
            <person name="Kumagai A."/>
            <person name="Itakura S."/>
            <person name="Fukuzumi Y."/>
            <person name="Fujimori Y."/>
            <person name="Komiyama M."/>
            <person name="Tashiro H."/>
            <person name="Tanigami A."/>
            <person name="Fujiwara T."/>
            <person name="Ono T."/>
            <person name="Yamada K."/>
            <person name="Fujii Y."/>
            <person name="Ozaki K."/>
            <person name="Hirao M."/>
            <person name="Ohmori Y."/>
            <person name="Kawabata A."/>
            <person name="Hikiji T."/>
            <person name="Kobatake N."/>
            <person name="Inagaki H."/>
            <person name="Ikema Y."/>
            <person name="Okamoto S."/>
            <person name="Okitani R."/>
            <person name="Kawakami T."/>
            <person name="Noguchi S."/>
            <person name="Itoh T."/>
            <person name="Shigeta K."/>
            <person name="Senba T."/>
            <person name="Matsumura K."/>
            <person name="Nakajima Y."/>
            <person name="Mizuno T."/>
            <person name="Morinaga M."/>
            <person name="Sasaki M."/>
            <person name="Togashi T."/>
            <person name="Oyama M."/>
            <person name="Hata H."/>
            <person name="Watanabe M."/>
            <person name="Komatsu T."/>
            <person name="Mizushima-Sugano J."/>
            <person name="Satoh T."/>
            <person name="Shirai Y."/>
            <person name="Takahashi Y."/>
            <person name="Nakagawa K."/>
            <person name="Okumura K."/>
            <person name="Nagase T."/>
            <person name="Nomura N."/>
            <person name="Kikuchi H."/>
            <person name="Masuho Y."/>
            <person name="Yamashita R."/>
            <person name="Nakai K."/>
            <person name="Yada T."/>
            <person name="Nakamura Y."/>
            <person name="Ohara O."/>
            <person name="Isogai T."/>
            <person name="Sugano S."/>
        </authorList>
    </citation>
    <scope>NUCLEOTIDE SEQUENCE [LARGE SCALE MRNA] (ISOFORM 2)</scope>
    <source>
        <tissue>Colon</tissue>
    </source>
</reference>
<reference key="5">
    <citation type="submission" date="2004-06" db="EMBL/GenBank/DDBJ databases">
        <title>Cloning of human full open reading frames in Gateway(TM) system entry vector (pDONR201).</title>
        <authorList>
            <person name="Ebert L."/>
            <person name="Schick M."/>
            <person name="Neubert P."/>
            <person name="Schatten R."/>
            <person name="Henze S."/>
            <person name="Korn B."/>
        </authorList>
    </citation>
    <scope>NUCLEOTIDE SEQUENCE [LARGE SCALE MRNA] (ISOFORM 3)</scope>
</reference>
<reference key="6">
    <citation type="journal article" date="2006" name="Nature">
        <title>The DNA sequence and biological annotation of human chromosome 1.</title>
        <authorList>
            <person name="Gregory S.G."/>
            <person name="Barlow K.F."/>
            <person name="McLay K.E."/>
            <person name="Kaul R."/>
            <person name="Swarbreck D."/>
            <person name="Dunham A."/>
            <person name="Scott C.E."/>
            <person name="Howe K.L."/>
            <person name="Woodfine K."/>
            <person name="Spencer C.C.A."/>
            <person name="Jones M.C."/>
            <person name="Gillson C."/>
            <person name="Searle S."/>
            <person name="Zhou Y."/>
            <person name="Kokocinski F."/>
            <person name="McDonald L."/>
            <person name="Evans R."/>
            <person name="Phillips K."/>
            <person name="Atkinson A."/>
            <person name="Cooper R."/>
            <person name="Jones C."/>
            <person name="Hall R.E."/>
            <person name="Andrews T.D."/>
            <person name="Lloyd C."/>
            <person name="Ainscough R."/>
            <person name="Almeida J.P."/>
            <person name="Ambrose K.D."/>
            <person name="Anderson F."/>
            <person name="Andrew R.W."/>
            <person name="Ashwell R.I.S."/>
            <person name="Aubin K."/>
            <person name="Babbage A.K."/>
            <person name="Bagguley C.L."/>
            <person name="Bailey J."/>
            <person name="Beasley H."/>
            <person name="Bethel G."/>
            <person name="Bird C.P."/>
            <person name="Bray-Allen S."/>
            <person name="Brown J.Y."/>
            <person name="Brown A.J."/>
            <person name="Buckley D."/>
            <person name="Burton J."/>
            <person name="Bye J."/>
            <person name="Carder C."/>
            <person name="Chapman J.C."/>
            <person name="Clark S.Y."/>
            <person name="Clarke G."/>
            <person name="Clee C."/>
            <person name="Cobley V."/>
            <person name="Collier R.E."/>
            <person name="Corby N."/>
            <person name="Coville G.J."/>
            <person name="Davies J."/>
            <person name="Deadman R."/>
            <person name="Dunn M."/>
            <person name="Earthrowl M."/>
            <person name="Ellington A.G."/>
            <person name="Errington H."/>
            <person name="Frankish A."/>
            <person name="Frankland J."/>
            <person name="French L."/>
            <person name="Garner P."/>
            <person name="Garnett J."/>
            <person name="Gay L."/>
            <person name="Ghori M.R.J."/>
            <person name="Gibson R."/>
            <person name="Gilby L.M."/>
            <person name="Gillett W."/>
            <person name="Glithero R.J."/>
            <person name="Grafham D.V."/>
            <person name="Griffiths C."/>
            <person name="Griffiths-Jones S."/>
            <person name="Grocock R."/>
            <person name="Hammond S."/>
            <person name="Harrison E.S.I."/>
            <person name="Hart E."/>
            <person name="Haugen E."/>
            <person name="Heath P.D."/>
            <person name="Holmes S."/>
            <person name="Holt K."/>
            <person name="Howden P.J."/>
            <person name="Hunt A.R."/>
            <person name="Hunt S.E."/>
            <person name="Hunter G."/>
            <person name="Isherwood J."/>
            <person name="James R."/>
            <person name="Johnson C."/>
            <person name="Johnson D."/>
            <person name="Joy A."/>
            <person name="Kay M."/>
            <person name="Kershaw J.K."/>
            <person name="Kibukawa M."/>
            <person name="Kimberley A.M."/>
            <person name="King A."/>
            <person name="Knights A.J."/>
            <person name="Lad H."/>
            <person name="Laird G."/>
            <person name="Lawlor S."/>
            <person name="Leongamornlert D.A."/>
            <person name="Lloyd D.M."/>
            <person name="Loveland J."/>
            <person name="Lovell J."/>
            <person name="Lush M.J."/>
            <person name="Lyne R."/>
            <person name="Martin S."/>
            <person name="Mashreghi-Mohammadi M."/>
            <person name="Matthews L."/>
            <person name="Matthews N.S.W."/>
            <person name="McLaren S."/>
            <person name="Milne S."/>
            <person name="Mistry S."/>
            <person name="Moore M.J.F."/>
            <person name="Nickerson T."/>
            <person name="O'Dell C.N."/>
            <person name="Oliver K."/>
            <person name="Palmeiri A."/>
            <person name="Palmer S.A."/>
            <person name="Parker A."/>
            <person name="Patel D."/>
            <person name="Pearce A.V."/>
            <person name="Peck A.I."/>
            <person name="Pelan S."/>
            <person name="Phelps K."/>
            <person name="Phillimore B.J."/>
            <person name="Plumb R."/>
            <person name="Rajan J."/>
            <person name="Raymond C."/>
            <person name="Rouse G."/>
            <person name="Saenphimmachak C."/>
            <person name="Sehra H.K."/>
            <person name="Sheridan E."/>
            <person name="Shownkeen R."/>
            <person name="Sims S."/>
            <person name="Skuce C.D."/>
            <person name="Smith M."/>
            <person name="Steward C."/>
            <person name="Subramanian S."/>
            <person name="Sycamore N."/>
            <person name="Tracey A."/>
            <person name="Tromans A."/>
            <person name="Van Helmond Z."/>
            <person name="Wall M."/>
            <person name="Wallis J.M."/>
            <person name="White S."/>
            <person name="Whitehead S.L."/>
            <person name="Wilkinson J.E."/>
            <person name="Willey D.L."/>
            <person name="Williams H."/>
            <person name="Wilming L."/>
            <person name="Wray P.W."/>
            <person name="Wu Z."/>
            <person name="Coulson A."/>
            <person name="Vaudin M."/>
            <person name="Sulston J.E."/>
            <person name="Durbin R.M."/>
            <person name="Hubbard T."/>
            <person name="Wooster R."/>
            <person name="Dunham I."/>
            <person name="Carter N.P."/>
            <person name="McVean G."/>
            <person name="Ross M.T."/>
            <person name="Harrow J."/>
            <person name="Olson M.V."/>
            <person name="Beck S."/>
            <person name="Rogers J."/>
            <person name="Bentley D.R."/>
        </authorList>
    </citation>
    <scope>NUCLEOTIDE SEQUENCE [LARGE SCALE GENOMIC DNA]</scope>
</reference>
<reference key="7">
    <citation type="journal article" date="2004" name="Genome Res.">
        <title>The status, quality, and expansion of the NIH full-length cDNA project: the Mammalian Gene Collection (MGC).</title>
        <authorList>
            <consortium name="The MGC Project Team"/>
        </authorList>
    </citation>
    <scope>NUCLEOTIDE SEQUENCE [LARGE SCALE MRNA] (ISOFORM 1)</scope>
    <scope>NUCLEOTIDE SEQUENCE [LARGE SCALE MRNA] OF 7-467 (ISOFORM 5)</scope>
    <scope>VARIANT LEU-202</scope>
    <source>
        <tissue>Kidney</tissue>
        <tissue>Uterus</tissue>
    </source>
</reference>
<reference key="8">
    <citation type="journal article" date="2001" name="Genetics">
        <title>Regulation of physiological rates in Caenorhabditis elegans by a tRNA-modifying enzyme in the mitochondria.</title>
        <authorList>
            <person name="Lemieux J."/>
            <person name="Lakowski B."/>
            <person name="Webb A."/>
            <person name="Meng Y."/>
            <person name="Ubach A."/>
            <person name="Bussiere F."/>
            <person name="Barnes T."/>
            <person name="Hekimi S."/>
        </authorList>
    </citation>
    <scope>NUCLEOTIDE SEQUENCE [MRNA] OF 7-467 (ISOFORM 4)</scope>
</reference>
<reference key="9">
    <citation type="journal article" date="2006" name="Cell">
        <title>Global, in vivo, and site-specific phosphorylation dynamics in signaling networks.</title>
        <authorList>
            <person name="Olsen J.V."/>
            <person name="Blagoev B."/>
            <person name="Gnad F."/>
            <person name="Macek B."/>
            <person name="Kumar C."/>
            <person name="Mortensen P."/>
            <person name="Mann M."/>
        </authorList>
    </citation>
    <scope>IDENTIFICATION BY MASS SPECTROMETRY [LARGE SCALE ANALYSIS]</scope>
    <source>
        <tissue>Cervix carcinoma</tissue>
    </source>
</reference>
<reference key="10">
    <citation type="journal article" date="2010" name="Sci. Signal.">
        <title>Quantitative phosphoproteomics reveals widespread full phosphorylation site occupancy during mitosis.</title>
        <authorList>
            <person name="Olsen J.V."/>
            <person name="Vermeulen M."/>
            <person name="Santamaria A."/>
            <person name="Kumar C."/>
            <person name="Miller M.L."/>
            <person name="Jensen L.J."/>
            <person name="Gnad F."/>
            <person name="Cox J."/>
            <person name="Jensen T.S."/>
            <person name="Nigg E.A."/>
            <person name="Brunak S."/>
            <person name="Mann M."/>
        </authorList>
    </citation>
    <scope>PHOSPHORYLATION [LARGE SCALE ANALYSIS] AT SER-455</scope>
    <scope>IDENTIFICATION BY MASS SPECTROMETRY [LARGE SCALE ANALYSIS]</scope>
    <source>
        <tissue>Cervix carcinoma</tissue>
    </source>
</reference>
<reference key="11">
    <citation type="journal article" date="2011" name="BMC Syst. Biol.">
        <title>Initial characterization of the human central proteome.</title>
        <authorList>
            <person name="Burkard T.R."/>
            <person name="Planyavsky M."/>
            <person name="Kaupe I."/>
            <person name="Breitwieser F.P."/>
            <person name="Buerckstuemmer T."/>
            <person name="Bennett K.L."/>
            <person name="Superti-Furga G."/>
            <person name="Colinge J."/>
        </authorList>
    </citation>
    <scope>IDENTIFICATION BY MASS SPECTROMETRY [LARGE SCALE ANALYSIS]</scope>
</reference>
<reference key="12">
    <citation type="journal article" date="2011" name="Sci. Signal.">
        <title>System-wide temporal characterization of the proteome and phosphoproteome of human embryonic stem cell differentiation.</title>
        <authorList>
            <person name="Rigbolt K.T."/>
            <person name="Prokhorova T.A."/>
            <person name="Akimov V."/>
            <person name="Henningsen J."/>
            <person name="Johansen P.T."/>
            <person name="Kratchmarova I."/>
            <person name="Kassem M."/>
            <person name="Mann M."/>
            <person name="Olsen J.V."/>
            <person name="Blagoev B."/>
        </authorList>
    </citation>
    <scope>IDENTIFICATION BY MASS SPECTROMETRY [LARGE SCALE ANALYSIS]</scope>
</reference>
<reference key="13">
    <citation type="journal article" date="2013" name="J. Proteome Res.">
        <title>Toward a comprehensive characterization of a human cancer cell phosphoproteome.</title>
        <authorList>
            <person name="Zhou H."/>
            <person name="Di Palma S."/>
            <person name="Preisinger C."/>
            <person name="Peng M."/>
            <person name="Polat A.N."/>
            <person name="Heck A.J."/>
            <person name="Mohammed S."/>
        </authorList>
    </citation>
    <scope>PHOSPHORYLATION [LARGE SCALE ANALYSIS] AT SER-443</scope>
    <scope>IDENTIFICATION BY MASS SPECTROMETRY [LARGE SCALE ANALYSIS]</scope>
    <source>
        <tissue>Cervix carcinoma</tissue>
        <tissue>Erythroleukemia</tissue>
    </source>
</reference>
<reference key="14">
    <citation type="journal article" date="2013" name="Mol. Cell. Biol.">
        <title>Human cells have a limited set of tRNA anticodon loop substrates of the tRNA isopentenyltransferase TRIT1 tumor suppressor.</title>
        <authorList>
            <person name="Lamichhane T.N."/>
            <person name="Mattijssen S."/>
            <person name="Maraia R.J."/>
        </authorList>
    </citation>
    <scope>FUNCTION</scope>
    <scope>CATALYTIC ACTIVITY</scope>
</reference>
<reference key="15">
    <citation type="journal article" date="2014" name="PLoS Genet.">
        <title>Defective i6A37 modification of mitochondrial and cytosolic tRNAs results from pathogenic mutations in TRIT1 and its substrate tRNA.</title>
        <authorList>
            <person name="Yarham J.W."/>
            <person name="Lamichhane T.N."/>
            <person name="Pyle A."/>
            <person name="Mattijssen S."/>
            <person name="Baruffini E."/>
            <person name="Bruni F."/>
            <person name="Donnini C."/>
            <person name="Vassilev A."/>
            <person name="He L."/>
            <person name="Blakely E.L."/>
            <person name="Griffin H."/>
            <person name="Santibanez-Koref M."/>
            <person name="Bindoff L.A."/>
            <person name="Ferrero I."/>
            <person name="Chinnery P.F."/>
            <person name="McFarland R."/>
            <person name="Maraia R.J."/>
            <person name="Taylor R.W."/>
        </authorList>
    </citation>
    <scope>FUNCTION</scope>
    <scope>CATALYTIC ACTIVITY</scope>
    <scope>SUBCELLULAR LOCATION</scope>
    <scope>INVOLVEMENT IN COXPD35</scope>
    <scope>VARIANT COXPD35 GLN-323</scope>
    <scope>CHARACTERIZATION OF VARIANT COXPD35 GLN-323</scope>
</reference>
<reference key="16">
    <citation type="journal article" date="2020" name="Eur. J. Med. Genet.">
        <title>Expansion of the phenotype of biallelic variants in TRIT1.</title>
        <authorList>
            <person name="Forde K.M."/>
            <person name="Molloy B."/>
            <person name="Conroy J."/>
            <person name="Green A.J."/>
            <person name="King M.D."/>
            <person name="Buckley P.G."/>
            <person name="Ryan S."/>
            <person name="Gorman K.M."/>
        </authorList>
    </citation>
    <scope>INVOLVEMENT IN COXPD35</scope>
</reference>
<reference key="17">
    <citation type="journal article" date="2021" name="Mol. Cell">
        <title>Balancing of mitochondrial translation through METTL8-mediated m3C modification of mitochondrial tRNAs.</title>
        <authorList>
            <person name="Schoeller E."/>
            <person name="Marks J."/>
            <person name="Marchand V."/>
            <person name="Bruckmann A."/>
            <person name="Powell C.A."/>
            <person name="Reichold M."/>
            <person name="Mutti C.D."/>
            <person name="Dettmer K."/>
            <person name="Feederle R."/>
            <person name="Huettelmaier S."/>
            <person name="Helm M."/>
            <person name="Oefner P."/>
            <person name="Minczuk M."/>
            <person name="Motorin Y."/>
            <person name="Hafner M."/>
            <person name="Meister G."/>
        </authorList>
    </citation>
    <scope>FUNCTION</scope>
</reference>
<reference key="18">
    <citation type="journal article" date="2017" name="Hum. Mutat.">
        <title>Matchmaking facilitates the diagnosis of an autosomal-recessive mitochondrial disease caused by biallelic mutation of the tRNA isopentenyltransferase (TRIT1) gene.</title>
        <authorList>
            <consortium name="Care4Rare Consortium"/>
            <person name="Kernohan K.D."/>
            <person name="Dyment D.A."/>
            <person name="Pupavac M."/>
            <person name="Cramer Z."/>
            <person name="McBride A."/>
            <person name="Bernard G."/>
            <person name="Straub I."/>
            <person name="Tetreault M."/>
            <person name="Hartley T."/>
            <person name="Huang L."/>
            <person name="Sell E."/>
            <person name="Majewski J."/>
            <person name="Rosenblatt D.S."/>
            <person name="Shoubridge E."/>
            <person name="Mhanni A."/>
            <person name="Myers T."/>
            <person name="Proud V."/>
            <person name="Vergano S."/>
            <person name="Spangler B."/>
            <person name="Farrow E."/>
            <person name="Kussman J."/>
            <person name="Safina N."/>
            <person name="Saunders C."/>
            <person name="Boycott K.M."/>
            <person name="Thiffault I."/>
        </authorList>
    </citation>
    <scope>INVOLVEMENT IN COXPD35</scope>
    <scope>VARIANTS COXPD35 8-ARG--VAL-467 DEL; SER-283; GLU-286; 402-ARG--VAL-467 DEL AND PRO-419</scope>
</reference>
<reference key="19">
    <citation type="journal article" date="2021" name="Brain Dev.">
        <title>The first Korean cases of combined oxidative phosphorylation deficiency 35 with two novel TRIT1 mutations in two siblings confirmed by clinical and molecular investigation.</title>
        <authorList>
            <person name="Yoo S."/>
            <person name="Kim Y.A."/>
            <person name="Yoon J.Y."/>
            <person name="Seo G.H."/>
            <person name="Keum C."/>
            <person name="Cheon C.K."/>
        </authorList>
    </citation>
    <scope>VARIANT COXPD35 LYS-409</scope>
</reference>
<keyword id="KW-0025">Alternative splicing</keyword>
<keyword id="KW-0067">ATP-binding</keyword>
<keyword id="KW-0963">Cytoplasm</keyword>
<keyword id="KW-0225">Disease variant</keyword>
<keyword id="KW-0479">Metal-binding</keyword>
<keyword id="KW-0496">Mitochondrion</keyword>
<keyword id="KW-0547">Nucleotide-binding</keyword>
<keyword id="KW-0597">Phosphoprotein</keyword>
<keyword id="KW-1274">Primary mitochondrial disease</keyword>
<keyword id="KW-1267">Proteomics identification</keyword>
<keyword id="KW-1185">Reference proteome</keyword>
<keyword id="KW-0808">Transferase</keyword>
<keyword id="KW-0809">Transit peptide</keyword>
<keyword id="KW-0819">tRNA processing</keyword>
<keyword id="KW-0862">Zinc</keyword>
<keyword id="KW-0863">Zinc-finger</keyword>
<protein>
    <recommendedName>
        <fullName>tRNA dimethylallyltransferase</fullName>
        <ecNumber evidence="7">2.5.1.75</ecNumber>
    </recommendedName>
    <alternativeName>
        <fullName>Isopentenyl-diphosphate:tRNA isopentenyltransferase</fullName>
        <shortName>IPP transferase</shortName>
        <shortName>IPPT</shortName>
    </alternativeName>
    <alternativeName>
        <fullName>hGRO1</fullName>
    </alternativeName>
    <alternativeName>
        <fullName>tRNA isopentenyltransferase 1</fullName>
        <shortName>IPTase</shortName>
    </alternativeName>
</protein>
<feature type="transit peptide" description="Mitochondrion" evidence="2">
    <location>
        <begin position="1"/>
        <end position="47"/>
    </location>
</feature>
<feature type="chain" id="PRO_0000019023" description="tRNA dimethylallyltransferase">
    <location>
        <begin position="48"/>
        <end position="467"/>
    </location>
</feature>
<feature type="zinc finger region" description="Matrin-type">
    <location>
        <begin position="395"/>
        <end position="425"/>
    </location>
</feature>
<feature type="region of interest" description="Interaction with substrate tRNA" evidence="1">
    <location>
        <begin position="55"/>
        <end position="58"/>
    </location>
</feature>
<feature type="region of interest" description="Interaction with substrate tRNA" evidence="1">
    <location>
        <begin position="183"/>
        <end position="187"/>
    </location>
</feature>
<feature type="region of interest" description="Core aggregation region" evidence="1">
    <location>
        <begin position="221"/>
        <end position="230"/>
    </location>
</feature>
<feature type="region of interest" description="Interaction with isopentenylpyrophosphate transferase" evidence="1">
    <location>
        <begin position="233"/>
        <end position="255"/>
    </location>
</feature>
<feature type="region of interest" description="Interaction with substrate tRNA" evidence="1">
    <location>
        <begin position="281"/>
        <end position="283"/>
    </location>
</feature>
<feature type="region of interest" description="Interaction with substrate tRNA" evidence="1">
    <location>
        <begin position="313"/>
        <end position="331"/>
    </location>
</feature>
<feature type="region of interest" description="Disordered" evidence="3">
    <location>
        <begin position="429"/>
        <end position="467"/>
    </location>
</feature>
<feature type="compositionally biased region" description="Polar residues" evidence="3">
    <location>
        <begin position="433"/>
        <end position="444"/>
    </location>
</feature>
<feature type="compositionally biased region" description="Basic and acidic residues" evidence="3">
    <location>
        <begin position="445"/>
        <end position="454"/>
    </location>
</feature>
<feature type="binding site" evidence="1">
    <location>
        <begin position="32"/>
        <end position="37"/>
    </location>
    <ligand>
        <name>dimethylallyl diphosphate</name>
        <dbReference type="ChEBI" id="CHEBI:57623"/>
    </ligand>
</feature>
<feature type="site" description="Interaction with substrate tRNA" evidence="1">
    <location>
        <position position="122"/>
    </location>
</feature>
<feature type="site" description="Interaction with substrate tRNA" evidence="1">
    <location>
        <position position="206"/>
    </location>
</feature>
<feature type="modified residue" description="Phosphoserine" evidence="19">
    <location>
        <position position="443"/>
    </location>
</feature>
<feature type="modified residue" description="Phosphoserine" evidence="18">
    <location>
        <position position="455"/>
    </location>
</feature>
<feature type="splice variant" id="VSP_010719" description="In isoform 2 and isoform 3." evidence="13 16">
    <location>
        <begin position="1"/>
        <end position="141"/>
    </location>
</feature>
<feature type="splice variant" id="VSP_053746" description="In isoform 6." evidence="15">
    <original>MASVA</original>
    <variation>MFRKI</variation>
    <location>
        <begin position="1"/>
        <end position="5"/>
    </location>
</feature>
<feature type="splice variant" id="VSP_053747" description="In isoform 6." evidence="15">
    <location>
        <begin position="6"/>
        <end position="309"/>
    </location>
</feature>
<feature type="splice variant" id="VSP_012415" description="In isoform 5." evidence="14">
    <location>
        <begin position="59"/>
        <end position="138"/>
    </location>
</feature>
<feature type="splice variant" id="VSP_010720" description="In isoform 3 and isoform 5." evidence="14 16">
    <location>
        <begin position="235"/>
        <end position="236"/>
    </location>
</feature>
<feature type="splice variant" id="VSP_010721" description="In isoform 4." evidence="12">
    <location>
        <begin position="311"/>
        <end position="336"/>
    </location>
</feature>
<feature type="sequence variant" id="VAR_080745" description="In COXPD35." evidence="8">
    <location>
        <begin position="8"/>
        <end position="467"/>
    </location>
</feature>
<feature type="sequence variant" id="VAR_020486" description="In dbSNP:rs3738671." evidence="5">
    <original>F</original>
    <variation>L</variation>
    <location>
        <position position="202"/>
    </location>
</feature>
<feature type="sequence variant" id="VAR_080746" description="In COXPD35; uncertain significance; dbSNP:rs199622789." evidence="8">
    <original>I</original>
    <variation>S</variation>
    <location>
        <position position="283"/>
    </location>
</feature>
<feature type="sequence variant" id="VAR_080747" description="In COXPD35; uncertain significance; dbSNP:rs1060505019." evidence="8">
    <original>K</original>
    <variation>E</variation>
    <location>
        <position position="286"/>
    </location>
</feature>
<feature type="sequence variant" id="VAR_080748" description="In COXPD35; reduced tRNA dimethylallyltransferase activity; dbSNP:rs1047420796." evidence="7">
    <original>R</original>
    <variation>Q</variation>
    <location>
        <position position="323"/>
    </location>
</feature>
<feature type="sequence variant" id="VAR_080749" description="In COXPD35; uncertain significance." evidence="8">
    <location>
        <begin position="402"/>
        <end position="467"/>
    </location>
</feature>
<feature type="sequence variant" id="VAR_085917" description="In COXPD35; uncertain significance; dbSNP:rs764506732." evidence="10">
    <original>E</original>
    <variation>K</variation>
    <location>
        <position position="409"/>
    </location>
</feature>
<feature type="sequence variant" id="VAR_080750" description="In COXPD35; uncertain significance; dbSNP:rs566435653." evidence="8">
    <original>H</original>
    <variation>P</variation>
    <location>
        <position position="419"/>
    </location>
</feature>
<feature type="sequence conflict" description="In Ref. 5; CAG33507." evidence="17" ref="5">
    <original>S</original>
    <variation>G</variation>
    <location>
        <position position="303"/>
    </location>
</feature>
<feature type="sequence conflict" description="In Ref. 8; AAL14107." evidence="17" ref="8">
    <original>H</original>
    <variation>Y</variation>
    <location>
        <position position="446"/>
    </location>
</feature>
<organism>
    <name type="scientific">Homo sapiens</name>
    <name type="common">Human</name>
    <dbReference type="NCBI Taxonomy" id="9606"/>
    <lineage>
        <taxon>Eukaryota</taxon>
        <taxon>Metazoa</taxon>
        <taxon>Chordata</taxon>
        <taxon>Craniata</taxon>
        <taxon>Vertebrata</taxon>
        <taxon>Euteleostomi</taxon>
        <taxon>Mammalia</taxon>
        <taxon>Eutheria</taxon>
        <taxon>Euarchontoglires</taxon>
        <taxon>Primates</taxon>
        <taxon>Haplorrhini</taxon>
        <taxon>Catarrhini</taxon>
        <taxon>Hominidae</taxon>
        <taxon>Homo</taxon>
    </lineage>
</organism>
<dbReference type="EC" id="2.5.1.75" evidence="7"/>
<dbReference type="EMBL" id="AF074918">
    <property type="protein sequence ID" value="AAG31324.1"/>
    <property type="molecule type" value="Transcribed_RNA"/>
</dbReference>
<dbReference type="EMBL" id="AY702944">
    <property type="protein sequence ID" value="AAW63405.1"/>
    <property type="molecule type" value="mRNA"/>
</dbReference>
<dbReference type="EMBL" id="AY702945">
    <property type="protein sequence ID" value="AAW63406.1"/>
    <property type="molecule type" value="mRNA"/>
</dbReference>
<dbReference type="EMBL" id="AY303390">
    <property type="protein sequence ID" value="AAP60111.1"/>
    <property type="molecule type" value="mRNA"/>
</dbReference>
<dbReference type="EMBL" id="AK000068">
    <property type="protein sequence ID" value="BAA90923.1"/>
    <property type="molecule type" value="mRNA"/>
</dbReference>
<dbReference type="EMBL" id="CR457226">
    <property type="protein sequence ID" value="CAG33507.1"/>
    <property type="molecule type" value="mRNA"/>
</dbReference>
<dbReference type="EMBL" id="AL033527">
    <property type="status" value="NOT_ANNOTATED_CDS"/>
    <property type="molecule type" value="Genomic_DNA"/>
</dbReference>
<dbReference type="EMBL" id="BC010741">
    <property type="protein sequence ID" value="AAH10741.2"/>
    <property type="molecule type" value="mRNA"/>
</dbReference>
<dbReference type="EMBL" id="BC107569">
    <property type="protein sequence ID" value="AAI07570.1"/>
    <property type="molecule type" value="mRNA"/>
</dbReference>
<dbReference type="EMBL" id="BC128155">
    <property type="protein sequence ID" value="AAI28156.1"/>
    <property type="molecule type" value="mRNA"/>
</dbReference>
<dbReference type="EMBL" id="AY052768">
    <property type="protein sequence ID" value="AAL14107.1"/>
    <property type="molecule type" value="mRNA"/>
</dbReference>
<dbReference type="CCDS" id="CCDS30681.1">
    <molecule id="Q9H3H1-1"/>
</dbReference>
<dbReference type="CCDS" id="CCDS81302.1">
    <molecule id="Q9H3H1-5"/>
</dbReference>
<dbReference type="CCDS" id="CCDS81303.1">
    <molecule id="Q9H3H1-4"/>
</dbReference>
<dbReference type="RefSeq" id="NP_001299620.1">
    <molecule id="Q9H3H1-4"/>
    <property type="nucleotide sequence ID" value="NM_001312691.1"/>
</dbReference>
<dbReference type="RefSeq" id="NP_001299621.1">
    <molecule id="Q9H3H1-5"/>
    <property type="nucleotide sequence ID" value="NM_001312692.1"/>
</dbReference>
<dbReference type="RefSeq" id="NP_060116.2">
    <molecule id="Q9H3H1-1"/>
    <property type="nucleotide sequence ID" value="NM_017646.5"/>
</dbReference>
<dbReference type="RefSeq" id="XP_006710769.1">
    <property type="nucleotide sequence ID" value="XM_006710706.1"/>
</dbReference>
<dbReference type="RefSeq" id="XP_047279181.1">
    <molecule id="Q9H3H1-2"/>
    <property type="nucleotide sequence ID" value="XM_047423225.1"/>
</dbReference>
<dbReference type="RefSeq" id="XP_054193180.1">
    <molecule id="Q9H3H1-2"/>
    <property type="nucleotide sequence ID" value="XM_054337205.1"/>
</dbReference>
<dbReference type="SMR" id="Q9H3H1"/>
<dbReference type="BioGRID" id="120161">
    <property type="interactions" value="18"/>
</dbReference>
<dbReference type="FunCoup" id="Q9H3H1">
    <property type="interactions" value="2556"/>
</dbReference>
<dbReference type="IntAct" id="Q9H3H1">
    <property type="interactions" value="10"/>
</dbReference>
<dbReference type="MINT" id="Q9H3H1"/>
<dbReference type="STRING" id="9606.ENSP00000321810"/>
<dbReference type="GlyGen" id="Q9H3H1">
    <property type="glycosylation" value="2 sites, 1 N-linked glycan (1 site), 1 O-linked glycan (1 site)"/>
</dbReference>
<dbReference type="iPTMnet" id="Q9H3H1"/>
<dbReference type="MetOSite" id="Q9H3H1"/>
<dbReference type="PhosphoSitePlus" id="Q9H3H1"/>
<dbReference type="BioMuta" id="TRIT1"/>
<dbReference type="DMDM" id="56405066"/>
<dbReference type="jPOST" id="Q9H3H1"/>
<dbReference type="MassIVE" id="Q9H3H1"/>
<dbReference type="PaxDb" id="9606-ENSP00000321810"/>
<dbReference type="PeptideAtlas" id="Q9H3H1"/>
<dbReference type="ProteomicsDB" id="61872"/>
<dbReference type="ProteomicsDB" id="80709">
    <molecule id="Q9H3H1-1"/>
</dbReference>
<dbReference type="ProteomicsDB" id="80710">
    <molecule id="Q9H3H1-2"/>
</dbReference>
<dbReference type="ProteomicsDB" id="80711">
    <molecule id="Q9H3H1-3"/>
</dbReference>
<dbReference type="ProteomicsDB" id="80712">
    <molecule id="Q9H3H1-4"/>
</dbReference>
<dbReference type="ProteomicsDB" id="80713">
    <molecule id="Q9H3H1-5"/>
</dbReference>
<dbReference type="Pumba" id="Q9H3H1"/>
<dbReference type="Antibodypedia" id="17887">
    <property type="antibodies" value="131 antibodies from 23 providers"/>
</dbReference>
<dbReference type="DNASU" id="54802"/>
<dbReference type="Ensembl" id="ENST00000316891.10">
    <molecule id="Q9H3H1-1"/>
    <property type="protein sequence ID" value="ENSP00000321810.5"/>
    <property type="gene ID" value="ENSG00000043514.17"/>
</dbReference>
<dbReference type="Ensembl" id="ENST00000372818.5">
    <molecule id="Q9H3H1-4"/>
    <property type="protein sequence ID" value="ENSP00000361905.1"/>
    <property type="gene ID" value="ENSG00000043514.17"/>
</dbReference>
<dbReference type="Ensembl" id="ENST00000441669.6">
    <molecule id="Q9H3H1-5"/>
    <property type="protein sequence ID" value="ENSP00000388333.2"/>
    <property type="gene ID" value="ENSG00000043514.17"/>
</dbReference>
<dbReference type="Ensembl" id="ENST00000537440.5">
    <molecule id="Q9H3H1-6"/>
    <property type="protein sequence ID" value="ENSP00000437700.1"/>
    <property type="gene ID" value="ENSG00000043514.17"/>
</dbReference>
<dbReference type="GeneID" id="54802"/>
<dbReference type="KEGG" id="hsa:54802"/>
<dbReference type="MANE-Select" id="ENST00000316891.10">
    <property type="protein sequence ID" value="ENSP00000321810.5"/>
    <property type="RefSeq nucleotide sequence ID" value="NM_017646.6"/>
    <property type="RefSeq protein sequence ID" value="NP_060116.2"/>
</dbReference>
<dbReference type="UCSC" id="uc001cem.5">
    <molecule id="Q9H3H1-1"/>
    <property type="organism name" value="human"/>
</dbReference>
<dbReference type="AGR" id="HGNC:20286"/>
<dbReference type="CTD" id="54802"/>
<dbReference type="DisGeNET" id="54802"/>
<dbReference type="GeneCards" id="TRIT1"/>
<dbReference type="HGNC" id="HGNC:20286">
    <property type="gene designation" value="TRIT1"/>
</dbReference>
<dbReference type="HPA" id="ENSG00000043514">
    <property type="expression patterns" value="Low tissue specificity"/>
</dbReference>
<dbReference type="MalaCards" id="TRIT1"/>
<dbReference type="MIM" id="617840">
    <property type="type" value="gene"/>
</dbReference>
<dbReference type="MIM" id="617873">
    <property type="type" value="phenotype"/>
</dbReference>
<dbReference type="neXtProt" id="NX_Q9H3H1"/>
<dbReference type="OpenTargets" id="ENSG00000043514"/>
<dbReference type="PharmGKB" id="PA134943037"/>
<dbReference type="VEuPathDB" id="HostDB:ENSG00000043514"/>
<dbReference type="eggNOG" id="KOG1384">
    <property type="taxonomic scope" value="Eukaryota"/>
</dbReference>
<dbReference type="GeneTree" id="ENSGT00390000015214"/>
<dbReference type="HOGENOM" id="CLU_032616_2_2_1"/>
<dbReference type="InParanoid" id="Q9H3H1"/>
<dbReference type="OMA" id="WGLHLKS"/>
<dbReference type="OrthoDB" id="775260at2759"/>
<dbReference type="PAN-GO" id="Q9H3H1">
    <property type="GO annotations" value="3 GO annotations based on evolutionary models"/>
</dbReference>
<dbReference type="PhylomeDB" id="Q9H3H1"/>
<dbReference type="TreeFam" id="TF315069"/>
<dbReference type="BRENDA" id="2.5.1.75">
    <property type="organism ID" value="2681"/>
</dbReference>
<dbReference type="PathwayCommons" id="Q9H3H1"/>
<dbReference type="Reactome" id="R-HSA-6782315">
    <property type="pathway name" value="tRNA modification in the nucleus and cytosol"/>
</dbReference>
<dbReference type="Reactome" id="R-HSA-6787450">
    <property type="pathway name" value="tRNA modification in the mitochondrion"/>
</dbReference>
<dbReference type="SignaLink" id="Q9H3H1"/>
<dbReference type="BioGRID-ORCS" id="54802">
    <property type="hits" value="206 hits in 1161 CRISPR screens"/>
</dbReference>
<dbReference type="ChiTaRS" id="TRIT1">
    <property type="organism name" value="human"/>
</dbReference>
<dbReference type="GeneWiki" id="TRIT1"/>
<dbReference type="GenomeRNAi" id="54802"/>
<dbReference type="Pharos" id="Q9H3H1">
    <property type="development level" value="Tbio"/>
</dbReference>
<dbReference type="PRO" id="PR:Q9H3H1"/>
<dbReference type="Proteomes" id="UP000005640">
    <property type="component" value="Chromosome 1"/>
</dbReference>
<dbReference type="RNAct" id="Q9H3H1">
    <property type="molecule type" value="protein"/>
</dbReference>
<dbReference type="Bgee" id="ENSG00000043514">
    <property type="expression patterns" value="Expressed in oocyte and 204 other cell types or tissues"/>
</dbReference>
<dbReference type="ExpressionAtlas" id="Q9H3H1">
    <property type="expression patterns" value="baseline and differential"/>
</dbReference>
<dbReference type="GO" id="GO:0005759">
    <property type="term" value="C:mitochondrial matrix"/>
    <property type="evidence" value="ECO:0000304"/>
    <property type="project" value="Reactome"/>
</dbReference>
<dbReference type="GO" id="GO:0005739">
    <property type="term" value="C:mitochondrion"/>
    <property type="evidence" value="ECO:0000314"/>
    <property type="project" value="HPA"/>
</dbReference>
<dbReference type="GO" id="GO:0005524">
    <property type="term" value="F:ATP binding"/>
    <property type="evidence" value="ECO:0007669"/>
    <property type="project" value="UniProtKB-KW"/>
</dbReference>
<dbReference type="GO" id="GO:0003676">
    <property type="term" value="F:nucleic acid binding"/>
    <property type="evidence" value="ECO:0007669"/>
    <property type="project" value="InterPro"/>
</dbReference>
<dbReference type="GO" id="GO:0052381">
    <property type="term" value="F:tRNA dimethylallyltransferase activity"/>
    <property type="evidence" value="ECO:0000314"/>
    <property type="project" value="UniProt"/>
</dbReference>
<dbReference type="GO" id="GO:0008270">
    <property type="term" value="F:zinc ion binding"/>
    <property type="evidence" value="ECO:0007669"/>
    <property type="project" value="UniProtKB-KW"/>
</dbReference>
<dbReference type="GO" id="GO:0070900">
    <property type="term" value="P:mitochondrial tRNA modification"/>
    <property type="evidence" value="ECO:0000314"/>
    <property type="project" value="UniProt"/>
</dbReference>
<dbReference type="GO" id="GO:0006400">
    <property type="term" value="P:tRNA modification"/>
    <property type="evidence" value="ECO:0000314"/>
    <property type="project" value="UniProtKB"/>
</dbReference>
<dbReference type="FunFam" id="3.40.50.300:FF:001625">
    <property type="entry name" value="tRNA dimethylallyltransferase isoform X2"/>
    <property type="match status" value="1"/>
</dbReference>
<dbReference type="FunFam" id="1.10.20.140:FF:000002">
    <property type="entry name" value="tRNA dimethylallyltransferase, mitochondrial"/>
    <property type="match status" value="1"/>
</dbReference>
<dbReference type="Gene3D" id="1.10.20.140">
    <property type="match status" value="1"/>
</dbReference>
<dbReference type="Gene3D" id="3.30.160.60">
    <property type="entry name" value="Classic Zinc Finger"/>
    <property type="match status" value="1"/>
</dbReference>
<dbReference type="Gene3D" id="3.40.50.300">
    <property type="entry name" value="P-loop containing nucleotide triphosphate hydrolases"/>
    <property type="match status" value="1"/>
</dbReference>
<dbReference type="HAMAP" id="MF_00185">
    <property type="entry name" value="IPP_trans"/>
    <property type="match status" value="1"/>
</dbReference>
<dbReference type="InterPro" id="IPR039657">
    <property type="entry name" value="Dimethylallyltransferase"/>
</dbReference>
<dbReference type="InterPro" id="IPR030666">
    <property type="entry name" value="IPP_transferase_euk"/>
</dbReference>
<dbReference type="InterPro" id="IPR018022">
    <property type="entry name" value="IPT"/>
</dbReference>
<dbReference type="InterPro" id="IPR003604">
    <property type="entry name" value="Matrin/U1-like-C_Znf_C2H2"/>
</dbReference>
<dbReference type="InterPro" id="IPR027417">
    <property type="entry name" value="P-loop_NTPase"/>
</dbReference>
<dbReference type="InterPro" id="IPR036236">
    <property type="entry name" value="Znf_C2H2_sf"/>
</dbReference>
<dbReference type="NCBIfam" id="TIGR00174">
    <property type="entry name" value="miaA"/>
    <property type="match status" value="1"/>
</dbReference>
<dbReference type="PANTHER" id="PTHR11088">
    <property type="entry name" value="TRNA DIMETHYLALLYLTRANSFERASE"/>
    <property type="match status" value="1"/>
</dbReference>
<dbReference type="PANTHER" id="PTHR11088:SF89">
    <property type="entry name" value="TRNA DIMETHYLALLYLTRANSFERASE"/>
    <property type="match status" value="1"/>
</dbReference>
<dbReference type="Pfam" id="PF01715">
    <property type="entry name" value="IPPT"/>
    <property type="match status" value="1"/>
</dbReference>
<dbReference type="PIRSF" id="PIRSF039110">
    <property type="entry name" value="IPP_transferase"/>
    <property type="match status" value="1"/>
</dbReference>
<dbReference type="SMART" id="SM00451">
    <property type="entry name" value="ZnF_U1"/>
    <property type="match status" value="1"/>
</dbReference>
<dbReference type="SUPFAM" id="SSF57667">
    <property type="entry name" value="beta-beta-alpha zinc fingers"/>
    <property type="match status" value="1"/>
</dbReference>
<dbReference type="SUPFAM" id="SSF52540">
    <property type="entry name" value="P-loop containing nucleoside triphosphate hydrolases"/>
    <property type="match status" value="1"/>
</dbReference>
<gene>
    <name type="primary">TRIT1</name>
    <name type="synonym">IPT</name>
    <name type="synonym">MOD5</name>
</gene>